<name>RSUA_PASMU</name>
<reference key="1">
    <citation type="journal article" date="2001" name="Proc. Natl. Acad. Sci. U.S.A.">
        <title>Complete genomic sequence of Pasteurella multocida Pm70.</title>
        <authorList>
            <person name="May B.J."/>
            <person name="Zhang Q."/>
            <person name="Li L.L."/>
            <person name="Paustian M.L."/>
            <person name="Whittam T.S."/>
            <person name="Kapur V."/>
        </authorList>
    </citation>
    <scope>NUCLEOTIDE SEQUENCE [LARGE SCALE GENOMIC DNA]</scope>
    <source>
        <strain>Pm70</strain>
    </source>
</reference>
<proteinExistence type="inferred from homology"/>
<comment type="function">
    <text evidence="1">Responsible for synthesis of pseudouridine from uracil-516 in 16S ribosomal RNA.</text>
</comment>
<comment type="catalytic activity">
    <reaction>
        <text>uridine(516) in 16S rRNA = pseudouridine(516) in 16S rRNA</text>
        <dbReference type="Rhea" id="RHEA:38867"/>
        <dbReference type="Rhea" id="RHEA-COMP:10089"/>
        <dbReference type="Rhea" id="RHEA-COMP:10090"/>
        <dbReference type="ChEBI" id="CHEBI:65314"/>
        <dbReference type="ChEBI" id="CHEBI:65315"/>
        <dbReference type="EC" id="5.4.99.19"/>
    </reaction>
</comment>
<comment type="similarity">
    <text evidence="3">Belongs to the pseudouridine synthase RsuA family.</text>
</comment>
<organism>
    <name type="scientific">Pasteurella multocida (strain Pm70)</name>
    <dbReference type="NCBI Taxonomy" id="272843"/>
    <lineage>
        <taxon>Bacteria</taxon>
        <taxon>Pseudomonadati</taxon>
        <taxon>Pseudomonadota</taxon>
        <taxon>Gammaproteobacteria</taxon>
        <taxon>Pasteurellales</taxon>
        <taxon>Pasteurellaceae</taxon>
        <taxon>Pasteurella</taxon>
    </lineage>
</organism>
<sequence>MRLDKFLAENTGLTRSQANKVLKQSAVTVNGHVEKNGAQKVSQTDEICLEGEHLPWVSAGQYLMLYKPQGYVCSHEDGDYPTIYQFFDYPLAGKLHSAGRLDVDTTGLVLLTDDGKWSHRITSPKHHCEKTYLVTLADPVESHYQQACAEGMLLRGEKTPTKPATLEILDDYNVNLTISEGRYHQVKRMFAALGNKVVGLHRWKIGQIELDDRLAEGEYRSLSAEEIATFNK</sequence>
<feature type="chain" id="PRO_0000099970" description="Ribosomal small subunit pseudouridine synthase A">
    <location>
        <begin position="1"/>
        <end position="232"/>
    </location>
</feature>
<feature type="domain" description="S4 RNA-binding" evidence="2">
    <location>
        <begin position="1"/>
        <end position="68"/>
    </location>
</feature>
<feature type="active site" description="Nucleophile" evidence="1">
    <location>
        <position position="102"/>
    </location>
</feature>
<evidence type="ECO:0000250" key="1"/>
<evidence type="ECO:0000255" key="2">
    <source>
        <dbReference type="PROSITE-ProRule" id="PRU00182"/>
    </source>
</evidence>
<evidence type="ECO:0000305" key="3"/>
<dbReference type="EC" id="5.4.99.19"/>
<dbReference type="EMBL" id="AE004439">
    <property type="protein sequence ID" value="AAK02087.1"/>
    <property type="molecule type" value="Genomic_DNA"/>
</dbReference>
<dbReference type="RefSeq" id="WP_005722236.1">
    <property type="nucleotide sequence ID" value="NC_002663.1"/>
</dbReference>
<dbReference type="SMR" id="Q9CPN4"/>
<dbReference type="STRING" id="272843.PM0003"/>
<dbReference type="EnsemblBacteria" id="AAK02087">
    <property type="protein sequence ID" value="AAK02087"/>
    <property type="gene ID" value="PM0003"/>
</dbReference>
<dbReference type="KEGG" id="pmu:PM0003"/>
<dbReference type="PATRIC" id="fig|272843.6.peg.3"/>
<dbReference type="HOGENOM" id="CLU_024979_1_2_6"/>
<dbReference type="OrthoDB" id="9807213at2"/>
<dbReference type="Proteomes" id="UP000000809">
    <property type="component" value="Chromosome"/>
</dbReference>
<dbReference type="GO" id="GO:0160136">
    <property type="term" value="F:16S rRNA pseudouridine(516) synthase activity"/>
    <property type="evidence" value="ECO:0007669"/>
    <property type="project" value="UniProtKB-EC"/>
</dbReference>
<dbReference type="GO" id="GO:0003723">
    <property type="term" value="F:RNA binding"/>
    <property type="evidence" value="ECO:0007669"/>
    <property type="project" value="UniProtKB-KW"/>
</dbReference>
<dbReference type="GO" id="GO:0000455">
    <property type="term" value="P:enzyme-directed rRNA pseudouridine synthesis"/>
    <property type="evidence" value="ECO:0007669"/>
    <property type="project" value="UniProtKB-ARBA"/>
</dbReference>
<dbReference type="CDD" id="cd02553">
    <property type="entry name" value="PseudoU_synth_RsuA"/>
    <property type="match status" value="1"/>
</dbReference>
<dbReference type="CDD" id="cd00165">
    <property type="entry name" value="S4"/>
    <property type="match status" value="1"/>
</dbReference>
<dbReference type="FunFam" id="3.30.70.1560:FF:000001">
    <property type="entry name" value="Pseudouridine synthase"/>
    <property type="match status" value="1"/>
</dbReference>
<dbReference type="Gene3D" id="3.30.70.1560">
    <property type="entry name" value="Alpha-L RNA-binding motif"/>
    <property type="match status" value="1"/>
</dbReference>
<dbReference type="Gene3D" id="3.30.70.580">
    <property type="entry name" value="Pseudouridine synthase I, catalytic domain, N-terminal subdomain"/>
    <property type="match status" value="1"/>
</dbReference>
<dbReference type="Gene3D" id="3.10.290.10">
    <property type="entry name" value="RNA-binding S4 domain"/>
    <property type="match status" value="1"/>
</dbReference>
<dbReference type="InterPro" id="IPR042092">
    <property type="entry name" value="PsdUridine_s_RsuA/RluB/E/F_cat"/>
</dbReference>
<dbReference type="InterPro" id="IPR020103">
    <property type="entry name" value="PsdUridine_synth_cat_dom_sf"/>
</dbReference>
<dbReference type="InterPro" id="IPR006145">
    <property type="entry name" value="PsdUridine_synth_RsuA/RluA"/>
</dbReference>
<dbReference type="InterPro" id="IPR000748">
    <property type="entry name" value="PsdUridine_synth_RsuA/RluB/E/F"/>
</dbReference>
<dbReference type="InterPro" id="IPR018496">
    <property type="entry name" value="PsdUridine_synth_RsuA/RluB_CS"/>
</dbReference>
<dbReference type="InterPro" id="IPR050343">
    <property type="entry name" value="RsuA_PseudoU_synthase"/>
</dbReference>
<dbReference type="InterPro" id="IPR002942">
    <property type="entry name" value="S4_RNA-bd"/>
</dbReference>
<dbReference type="InterPro" id="IPR036986">
    <property type="entry name" value="S4_RNA-bd_sf"/>
</dbReference>
<dbReference type="InterPro" id="IPR020094">
    <property type="entry name" value="TruA/RsuA/RluB/E/F_N"/>
</dbReference>
<dbReference type="NCBIfam" id="NF008097">
    <property type="entry name" value="PRK10839.1"/>
    <property type="match status" value="1"/>
</dbReference>
<dbReference type="NCBIfam" id="TIGR00093">
    <property type="entry name" value="pseudouridine synthase"/>
    <property type="match status" value="1"/>
</dbReference>
<dbReference type="PANTHER" id="PTHR47683:SF4">
    <property type="entry name" value="PSEUDOURIDINE SYNTHASE"/>
    <property type="match status" value="1"/>
</dbReference>
<dbReference type="PANTHER" id="PTHR47683">
    <property type="entry name" value="PSEUDOURIDINE SYNTHASE FAMILY PROTEIN-RELATED"/>
    <property type="match status" value="1"/>
</dbReference>
<dbReference type="Pfam" id="PF00849">
    <property type="entry name" value="PseudoU_synth_2"/>
    <property type="match status" value="1"/>
</dbReference>
<dbReference type="Pfam" id="PF01479">
    <property type="entry name" value="S4"/>
    <property type="match status" value="1"/>
</dbReference>
<dbReference type="SMART" id="SM00363">
    <property type="entry name" value="S4"/>
    <property type="match status" value="1"/>
</dbReference>
<dbReference type="SUPFAM" id="SSF55174">
    <property type="entry name" value="Alpha-L RNA-binding motif"/>
    <property type="match status" value="1"/>
</dbReference>
<dbReference type="SUPFAM" id="SSF55120">
    <property type="entry name" value="Pseudouridine synthase"/>
    <property type="match status" value="1"/>
</dbReference>
<dbReference type="PROSITE" id="PS01149">
    <property type="entry name" value="PSI_RSU"/>
    <property type="match status" value="1"/>
</dbReference>
<dbReference type="PROSITE" id="PS50889">
    <property type="entry name" value="S4"/>
    <property type="match status" value="1"/>
</dbReference>
<accession>Q9CPN4</accession>
<protein>
    <recommendedName>
        <fullName>Ribosomal small subunit pseudouridine synthase A</fullName>
        <ecNumber>5.4.99.19</ecNumber>
    </recommendedName>
    <alternativeName>
        <fullName>16S pseudouridylate 516 synthase</fullName>
    </alternativeName>
    <alternativeName>
        <fullName>16S rRNA pseudouridine(516) synthase</fullName>
    </alternativeName>
    <alternativeName>
        <fullName>rRNA pseudouridylate synthase A</fullName>
    </alternativeName>
    <alternativeName>
        <fullName>rRNA-uridine isomerase A</fullName>
    </alternativeName>
</protein>
<keyword id="KW-0413">Isomerase</keyword>
<keyword id="KW-1185">Reference proteome</keyword>
<keyword id="KW-0694">RNA-binding</keyword>
<keyword id="KW-0698">rRNA processing</keyword>
<gene>
    <name type="primary">rsuA</name>
    <name type="ordered locus">PM0003</name>
</gene>